<gene>
    <name type="primary">DML2</name>
    <name type="ordered locus">At3g10010</name>
    <name type="ORF">T22K18.18</name>
</gene>
<organism>
    <name type="scientific">Arabidopsis thaliana</name>
    <name type="common">Mouse-ear cress</name>
    <dbReference type="NCBI Taxonomy" id="3702"/>
    <lineage>
        <taxon>Eukaryota</taxon>
        <taxon>Viridiplantae</taxon>
        <taxon>Streptophyta</taxon>
        <taxon>Embryophyta</taxon>
        <taxon>Tracheophyta</taxon>
        <taxon>Spermatophyta</taxon>
        <taxon>Magnoliopsida</taxon>
        <taxon>eudicotyledons</taxon>
        <taxon>Gunneridae</taxon>
        <taxon>Pentapetalae</taxon>
        <taxon>rosids</taxon>
        <taxon>malvids</taxon>
        <taxon>Brassicales</taxon>
        <taxon>Brassicaceae</taxon>
        <taxon>Camelineae</taxon>
        <taxon>Arabidopsis</taxon>
    </lineage>
</organism>
<sequence>MEVEGEVREKEARVKGRQPETEVLHGLPQEQSIFNNMQHNHQPDSDRRRLSLENLPGLYNMSCTQLLALANATVATGSSIGASSSSLSSQHPTDSWINSWKMDSNPWTLSKMQKQQYDVSTPQKFLCDLNLTPEELVSTSTQRTEPESPQITLKTPGKSLSETDHEPHDRIKKSVLGTGSPAAVKKRKIARNDEKSQLETPTLKRKKIRPKVVREGKTKKASSKAGIKKSSIAATATKTSEESNYVRPKRLTRRSIRFDFDLQEEDEEFCGIDFTSAGHVEGSSGEENLTDTTLGMFGHVPKGRRGQRRSNGFKKTDNDCLSSMLSLVNTGPGSFMESEEDRPSDSQISLGRQRSIMATRPRNFRSLKKLLQRIIPSKRDRKGCKLPRGLPKLTVASKLQLKVFRKKRSQRNRVASQFNARILDLQWRRQNPTGTSLADIWERSLTIDAITKLFEELDINKEGLCLPHNRETALILYKKSYEEQKAIVKYSKKQKPKVQLDPETSRVWKLLMSSIDCDGVDGSDEEKRKWWEEERNMFHGRANSFIARMRVVQGNRTFSPWKGSVVDSVVGVFLTQNVADHSSSSAYMDLAAEFPVEWNFNKGSCHEEWGSSVTQETILNLDPRTGVSTPRIRNPTRVIIEEIDDDENDIDAVCSQESSKTSDSSITSADQSKTMLLDPFNTVLMNEQVDSQMVKGKGHIPYTDDLNDLSQGISMVSSASTHCELNLNEVPPEVELCSHQQDPESTIQTQDQQESTRTEDVKKNRKKPTTSKPKKKSKESAKSTQKKSVDWDSLRKEAESGGRKRERTERTMDTVDWDALRCTDVHKIANIIIKRGMNNMLAERIKAFLNRLVKKHGSIDLEWLRDVPPDKAKEYLLSINGLGLKSVECVRLLSLHQIAFPVDTNVGRIAVRLGWVPLQPLPDELQMHLLELYPVLESVQKYLWPRLCKLDQKTLYELHYHMITFGKVFCTKVKPNCNACPMKAECRHYSSARASARLALPEPEESDRTSVMIHERRSKRKPVVVNFRPSLFLYQEKEQEAQRSQNCEPIIEEPASPEPEYIEHDIEDYPRDKNNVGTSEDPWENKDVIPTIILNKEAGTSHDLVVNKEAGTSHDLVVLSTYAAAIPRRKLKIKEKLRTEHHVFELPDHHSILEGFERREAEDIVPYLLAIWTPGETVNSIQPPKQRCALFESNNTLCNENKCFQCNKTREEESQTVRGTILIPCRTAMRGGFPLNGTYFQTNEVFADHDSSINPIDVPTELIWDLKRRVAYLGSSVSSICKGLSVEAIKYNFQEGYVCVRGFDRENRKPKSLVKRLHCSHVAIRTKEKTEE</sequence>
<comment type="function">
    <text evidence="1">Potential transcriptional activator that may act by nicking the target promoter. Catalyzes the release of 5-methylcytosine (5-meC) from DNA by a glycosylase/lyase mechanism (By similarity).</text>
</comment>
<comment type="cofactor">
    <cofactor evidence="1">
        <name>[4Fe-4S] cluster</name>
        <dbReference type="ChEBI" id="CHEBI:49883"/>
    </cofactor>
    <text evidence="1">Binds 1 [4Fe-4S] cluster. The cluster does not appear to play a role in catalysis, but is probably involved in the proper positioning of the enzyme along the DNA strand.</text>
</comment>
<comment type="subcellular location">
    <subcellularLocation>
        <location evidence="3">Nucleus</location>
    </subcellularLocation>
</comment>
<comment type="domain">
    <text>The DEMETER domain, which is present in proteins of the subfamily, is related to the J-domain, but lacks some important conserved residues.</text>
</comment>
<comment type="miscellaneous">
    <text>Although strongly related to DNA glycosylase proteins, it differs from these proteins because of its large size and its unique N-terminal basic domain. The DNA repair function has not been proved and may not exist.</text>
</comment>
<comment type="similarity">
    <text evidence="3">Belongs to the DNA glycosylase family. DEMETER subfamily.</text>
</comment>
<comment type="sequence caution" evidence="3">
    <conflict type="erroneous gene model prediction">
        <sequence resource="EMBL-CDS" id="AAF04422"/>
    </conflict>
</comment>
<evidence type="ECO:0000250" key="1"/>
<evidence type="ECO:0000256" key="2">
    <source>
        <dbReference type="SAM" id="MobiDB-lite"/>
    </source>
</evidence>
<evidence type="ECO:0000305" key="3"/>
<feature type="chain" id="PRO_0000102247" description="DEMETER-like protein 2">
    <location>
        <begin position="1"/>
        <end position="1332"/>
    </location>
</feature>
<feature type="region of interest" description="Disordered" evidence="2">
    <location>
        <begin position="1"/>
        <end position="29"/>
    </location>
</feature>
<feature type="region of interest" description="Disordered" evidence="2">
    <location>
        <begin position="137"/>
        <end position="242"/>
    </location>
</feature>
<feature type="region of interest" description="Disordered" evidence="2">
    <location>
        <begin position="280"/>
        <end position="317"/>
    </location>
</feature>
<feature type="region of interest" description="DEMETER">
    <location>
        <begin position="497"/>
        <end position="595"/>
    </location>
</feature>
<feature type="region of interest" description="Disordered" evidence="2">
    <location>
        <begin position="739"/>
        <end position="810"/>
    </location>
</feature>
<feature type="compositionally biased region" description="Basic and acidic residues" evidence="2">
    <location>
        <begin position="1"/>
        <end position="23"/>
    </location>
</feature>
<feature type="compositionally biased region" description="Polar residues" evidence="2">
    <location>
        <begin position="137"/>
        <end position="153"/>
    </location>
</feature>
<feature type="compositionally biased region" description="Low complexity" evidence="2">
    <location>
        <begin position="223"/>
        <end position="236"/>
    </location>
</feature>
<feature type="compositionally biased region" description="Basic residues" evidence="2">
    <location>
        <begin position="301"/>
        <end position="312"/>
    </location>
</feature>
<feature type="compositionally biased region" description="Polar residues" evidence="2">
    <location>
        <begin position="739"/>
        <end position="753"/>
    </location>
</feature>
<feature type="compositionally biased region" description="Basic residues" evidence="2">
    <location>
        <begin position="763"/>
        <end position="777"/>
    </location>
</feature>
<feature type="compositionally biased region" description="Basic and acidic residues" evidence="2">
    <location>
        <begin position="787"/>
        <end position="810"/>
    </location>
</feature>
<feature type="binding site" evidence="1">
    <location>
        <position position="970"/>
    </location>
    <ligand>
        <name>[4Fe-4S] cluster</name>
        <dbReference type="ChEBI" id="CHEBI:49883"/>
    </ligand>
</feature>
<feature type="binding site" evidence="1">
    <location>
        <position position="977"/>
    </location>
    <ligand>
        <name>[4Fe-4S] cluster</name>
        <dbReference type="ChEBI" id="CHEBI:49883"/>
    </ligand>
</feature>
<feature type="binding site" evidence="1">
    <location>
        <position position="980"/>
    </location>
    <ligand>
        <name>[4Fe-4S] cluster</name>
        <dbReference type="ChEBI" id="CHEBI:49883"/>
    </ligand>
</feature>
<feature type="binding site" evidence="1">
    <location>
        <position position="986"/>
    </location>
    <ligand>
        <name>[4Fe-4S] cluster</name>
        <dbReference type="ChEBI" id="CHEBI:49883"/>
    </ligand>
</feature>
<protein>
    <recommendedName>
        <fullName>DEMETER-like protein 2</fullName>
        <ecNumber>3.2.2.-</ecNumber>
    </recommendedName>
</protein>
<dbReference type="EC" id="3.2.2.-"/>
<dbReference type="EMBL" id="AC010927">
    <property type="protein sequence ID" value="AAF04422.1"/>
    <property type="status" value="ALT_SEQ"/>
    <property type="molecule type" value="Genomic_DNA"/>
</dbReference>
<dbReference type="EMBL" id="CP002686">
    <property type="protein sequence ID" value="AEE74848.1"/>
    <property type="molecule type" value="Genomic_DNA"/>
</dbReference>
<dbReference type="EMBL" id="CP002686">
    <property type="protein sequence ID" value="ANM64633.1"/>
    <property type="molecule type" value="Genomic_DNA"/>
</dbReference>
<dbReference type="RefSeq" id="NP_001326647.1">
    <property type="nucleotide sequence ID" value="NM_001337853.1"/>
</dbReference>
<dbReference type="RefSeq" id="NP_187612.5">
    <property type="nucleotide sequence ID" value="NM_111836.5"/>
</dbReference>
<dbReference type="SMR" id="Q9SR66"/>
<dbReference type="BioGRID" id="5496">
    <property type="interactions" value="2"/>
</dbReference>
<dbReference type="STRING" id="3702.Q9SR66"/>
<dbReference type="iPTMnet" id="Q9SR66"/>
<dbReference type="PaxDb" id="3702-AT3G10010.1"/>
<dbReference type="ProteomicsDB" id="222211"/>
<dbReference type="EnsemblPlants" id="AT3G10010.1">
    <property type="protein sequence ID" value="AT3G10010.1"/>
    <property type="gene ID" value="AT3G10010"/>
</dbReference>
<dbReference type="EnsemblPlants" id="AT3G10010.2">
    <property type="protein sequence ID" value="AT3G10010.2"/>
    <property type="gene ID" value="AT3G10010"/>
</dbReference>
<dbReference type="GeneID" id="820162"/>
<dbReference type="Gramene" id="AT3G10010.1">
    <property type="protein sequence ID" value="AT3G10010.1"/>
    <property type="gene ID" value="AT3G10010"/>
</dbReference>
<dbReference type="Gramene" id="AT3G10010.2">
    <property type="protein sequence ID" value="AT3G10010.2"/>
    <property type="gene ID" value="AT3G10010"/>
</dbReference>
<dbReference type="KEGG" id="ath:AT3G10010"/>
<dbReference type="Araport" id="AT3G10010"/>
<dbReference type="TAIR" id="AT3G10010">
    <property type="gene designation" value="DML2"/>
</dbReference>
<dbReference type="eggNOG" id="ENOG502QQKH">
    <property type="taxonomic scope" value="Eukaryota"/>
</dbReference>
<dbReference type="HOGENOM" id="CLU_259012_0_0_1"/>
<dbReference type="InParanoid" id="Q9SR66"/>
<dbReference type="OMA" id="RSQNCEP"/>
<dbReference type="PRO" id="PR:Q9SR66"/>
<dbReference type="Proteomes" id="UP000006548">
    <property type="component" value="Chromosome 3"/>
</dbReference>
<dbReference type="ExpressionAtlas" id="Q9SR66">
    <property type="expression patterns" value="baseline and differential"/>
</dbReference>
<dbReference type="GO" id="GO:0005634">
    <property type="term" value="C:nucleus"/>
    <property type="evidence" value="ECO:0007669"/>
    <property type="project" value="UniProtKB-SubCell"/>
</dbReference>
<dbReference type="GO" id="GO:0051539">
    <property type="term" value="F:4 iron, 4 sulfur cluster binding"/>
    <property type="evidence" value="ECO:0007669"/>
    <property type="project" value="UniProtKB-KW"/>
</dbReference>
<dbReference type="GO" id="GO:0003677">
    <property type="term" value="F:DNA binding"/>
    <property type="evidence" value="ECO:0007669"/>
    <property type="project" value="UniProtKB-KW"/>
</dbReference>
<dbReference type="GO" id="GO:0035514">
    <property type="term" value="F:DNA demethylase activity"/>
    <property type="evidence" value="ECO:0007669"/>
    <property type="project" value="InterPro"/>
</dbReference>
<dbReference type="GO" id="GO:0019104">
    <property type="term" value="F:DNA N-glycosylase activity"/>
    <property type="evidence" value="ECO:0007669"/>
    <property type="project" value="InterPro"/>
</dbReference>
<dbReference type="GO" id="GO:0046872">
    <property type="term" value="F:metal ion binding"/>
    <property type="evidence" value="ECO:0007669"/>
    <property type="project" value="UniProtKB-KW"/>
</dbReference>
<dbReference type="GO" id="GO:0006284">
    <property type="term" value="P:base-excision repair"/>
    <property type="evidence" value="ECO:0007669"/>
    <property type="project" value="InterPro"/>
</dbReference>
<dbReference type="GO" id="GO:0141166">
    <property type="term" value="P:chromosomal 5-methylcytosine DNA demethylation pathway"/>
    <property type="evidence" value="ECO:0007669"/>
    <property type="project" value="InterPro"/>
</dbReference>
<dbReference type="CDD" id="cd00056">
    <property type="entry name" value="ENDO3c"/>
    <property type="match status" value="1"/>
</dbReference>
<dbReference type="FunFam" id="1.10.1670.10:FF:000004">
    <property type="entry name" value="DNA glycosylase/AP lyase ROS1"/>
    <property type="match status" value="1"/>
</dbReference>
<dbReference type="Gene3D" id="1.10.1670.10">
    <property type="entry name" value="Helix-hairpin-Helix base-excision DNA repair enzymes (C-terminal)"/>
    <property type="match status" value="1"/>
</dbReference>
<dbReference type="InterPro" id="IPR044811">
    <property type="entry name" value="DME/ROS1"/>
</dbReference>
<dbReference type="InterPro" id="IPR011257">
    <property type="entry name" value="DNA_glycosylase"/>
</dbReference>
<dbReference type="InterPro" id="IPR003651">
    <property type="entry name" value="Endonuclease3_FeS-loop_motif"/>
</dbReference>
<dbReference type="InterPro" id="IPR003265">
    <property type="entry name" value="HhH-GPD_domain"/>
</dbReference>
<dbReference type="InterPro" id="IPR023170">
    <property type="entry name" value="HhH_base_excis_C"/>
</dbReference>
<dbReference type="InterPro" id="IPR028924">
    <property type="entry name" value="Perm-CXXC"/>
</dbReference>
<dbReference type="InterPro" id="IPR028925">
    <property type="entry name" value="RRM_DME"/>
</dbReference>
<dbReference type="PANTHER" id="PTHR46213:SF13">
    <property type="entry name" value="DEMETER-LIKE PROTEIN 2-RELATED"/>
    <property type="match status" value="1"/>
</dbReference>
<dbReference type="PANTHER" id="PTHR46213">
    <property type="entry name" value="TRANSCRIPTIONAL ACTIVATOR DEMETER"/>
    <property type="match status" value="1"/>
</dbReference>
<dbReference type="Pfam" id="PF15629">
    <property type="entry name" value="Perm-CXXC"/>
    <property type="match status" value="1"/>
</dbReference>
<dbReference type="Pfam" id="PF15628">
    <property type="entry name" value="RRM_DME"/>
    <property type="match status" value="1"/>
</dbReference>
<dbReference type="SMART" id="SM00478">
    <property type="entry name" value="ENDO3c"/>
    <property type="match status" value="1"/>
</dbReference>
<dbReference type="SMART" id="SM00525">
    <property type="entry name" value="FES"/>
    <property type="match status" value="1"/>
</dbReference>
<dbReference type="SUPFAM" id="SSF48150">
    <property type="entry name" value="DNA-glycosylase"/>
    <property type="match status" value="1"/>
</dbReference>
<name>DML2_ARATH</name>
<keyword id="KW-0004">4Fe-4S</keyword>
<keyword id="KW-0010">Activator</keyword>
<keyword id="KW-0238">DNA-binding</keyword>
<keyword id="KW-0378">Hydrolase</keyword>
<keyword id="KW-0408">Iron</keyword>
<keyword id="KW-0411">Iron-sulfur</keyword>
<keyword id="KW-0479">Metal-binding</keyword>
<keyword id="KW-0539">Nucleus</keyword>
<keyword id="KW-1185">Reference proteome</keyword>
<keyword id="KW-0804">Transcription</keyword>
<keyword id="KW-0805">Transcription regulation</keyword>
<proteinExistence type="inferred from homology"/>
<accession>Q9SR66</accession>
<accession>F4J2I4</accession>
<reference key="1">
    <citation type="journal article" date="2000" name="Nature">
        <title>Sequence and analysis of chromosome 3 of the plant Arabidopsis thaliana.</title>
        <authorList>
            <person name="Salanoubat M."/>
            <person name="Lemcke K."/>
            <person name="Rieger M."/>
            <person name="Ansorge W."/>
            <person name="Unseld M."/>
            <person name="Fartmann B."/>
            <person name="Valle G."/>
            <person name="Bloecker H."/>
            <person name="Perez-Alonso M."/>
            <person name="Obermaier B."/>
            <person name="Delseny M."/>
            <person name="Boutry M."/>
            <person name="Grivell L.A."/>
            <person name="Mache R."/>
            <person name="Puigdomenech P."/>
            <person name="De Simone V."/>
            <person name="Choisne N."/>
            <person name="Artiguenave F."/>
            <person name="Robert C."/>
            <person name="Brottier P."/>
            <person name="Wincker P."/>
            <person name="Cattolico L."/>
            <person name="Weissenbach J."/>
            <person name="Saurin W."/>
            <person name="Quetier F."/>
            <person name="Schaefer M."/>
            <person name="Mueller-Auer S."/>
            <person name="Gabel C."/>
            <person name="Fuchs M."/>
            <person name="Benes V."/>
            <person name="Wurmbach E."/>
            <person name="Drzonek H."/>
            <person name="Erfle H."/>
            <person name="Jordan N."/>
            <person name="Bangert S."/>
            <person name="Wiedelmann R."/>
            <person name="Kranz H."/>
            <person name="Voss H."/>
            <person name="Holland R."/>
            <person name="Brandt P."/>
            <person name="Nyakatura G."/>
            <person name="Vezzi A."/>
            <person name="D'Angelo M."/>
            <person name="Pallavicini A."/>
            <person name="Toppo S."/>
            <person name="Simionati B."/>
            <person name="Conrad A."/>
            <person name="Hornischer K."/>
            <person name="Kauer G."/>
            <person name="Loehnert T.-H."/>
            <person name="Nordsiek G."/>
            <person name="Reichelt J."/>
            <person name="Scharfe M."/>
            <person name="Schoen O."/>
            <person name="Bargues M."/>
            <person name="Terol J."/>
            <person name="Climent J."/>
            <person name="Navarro P."/>
            <person name="Collado C."/>
            <person name="Perez-Perez A."/>
            <person name="Ottenwaelder B."/>
            <person name="Duchemin D."/>
            <person name="Cooke R."/>
            <person name="Laudie M."/>
            <person name="Berger-Llauro C."/>
            <person name="Purnelle B."/>
            <person name="Masuy D."/>
            <person name="de Haan M."/>
            <person name="Maarse A.C."/>
            <person name="Alcaraz J.-P."/>
            <person name="Cottet A."/>
            <person name="Casacuberta E."/>
            <person name="Monfort A."/>
            <person name="Argiriou A."/>
            <person name="Flores M."/>
            <person name="Liguori R."/>
            <person name="Vitale D."/>
            <person name="Mannhaupt G."/>
            <person name="Haase D."/>
            <person name="Schoof H."/>
            <person name="Rudd S."/>
            <person name="Zaccaria P."/>
            <person name="Mewes H.-W."/>
            <person name="Mayer K.F.X."/>
            <person name="Kaul S."/>
            <person name="Town C.D."/>
            <person name="Koo H.L."/>
            <person name="Tallon L.J."/>
            <person name="Jenkins J."/>
            <person name="Rooney T."/>
            <person name="Rizzo M."/>
            <person name="Walts A."/>
            <person name="Utterback T."/>
            <person name="Fujii C.Y."/>
            <person name="Shea T.P."/>
            <person name="Creasy T.H."/>
            <person name="Haas B."/>
            <person name="Maiti R."/>
            <person name="Wu D."/>
            <person name="Peterson J."/>
            <person name="Van Aken S."/>
            <person name="Pai G."/>
            <person name="Militscher J."/>
            <person name="Sellers P."/>
            <person name="Gill J.E."/>
            <person name="Feldblyum T.V."/>
            <person name="Preuss D."/>
            <person name="Lin X."/>
            <person name="Nierman W.C."/>
            <person name="Salzberg S.L."/>
            <person name="White O."/>
            <person name="Venter J.C."/>
            <person name="Fraser C.M."/>
            <person name="Kaneko T."/>
            <person name="Nakamura Y."/>
            <person name="Sato S."/>
            <person name="Kato T."/>
            <person name="Asamizu E."/>
            <person name="Sasamoto S."/>
            <person name="Kimura T."/>
            <person name="Idesawa K."/>
            <person name="Kawashima K."/>
            <person name="Kishida Y."/>
            <person name="Kiyokawa C."/>
            <person name="Kohara M."/>
            <person name="Matsumoto M."/>
            <person name="Matsuno A."/>
            <person name="Muraki A."/>
            <person name="Nakayama S."/>
            <person name="Nakazaki N."/>
            <person name="Shinpo S."/>
            <person name="Takeuchi C."/>
            <person name="Wada T."/>
            <person name="Watanabe A."/>
            <person name="Yamada M."/>
            <person name="Yasuda M."/>
            <person name="Tabata S."/>
        </authorList>
    </citation>
    <scope>NUCLEOTIDE SEQUENCE [LARGE SCALE GENOMIC DNA]</scope>
    <source>
        <strain>cv. Columbia</strain>
    </source>
</reference>
<reference key="2">
    <citation type="journal article" date="2017" name="Plant J.">
        <title>Araport11: a complete reannotation of the Arabidopsis thaliana reference genome.</title>
        <authorList>
            <person name="Cheng C.Y."/>
            <person name="Krishnakumar V."/>
            <person name="Chan A.P."/>
            <person name="Thibaud-Nissen F."/>
            <person name="Schobel S."/>
            <person name="Town C.D."/>
        </authorList>
    </citation>
    <scope>GENOME REANNOTATION</scope>
    <source>
        <strain>cv. Columbia</strain>
    </source>
</reference>
<reference key="3">
    <citation type="journal article" date="2002" name="Cell">
        <title>DEMETER, a DNA glycosylase domain protein, is required for endosperm gene imprinting and seed viability in Arabidopsis.</title>
        <authorList>
            <person name="Choi Y."/>
            <person name="Gehring M."/>
            <person name="Johnson L."/>
            <person name="Hannon M."/>
            <person name="Harada J.J."/>
            <person name="Goldberg R.B."/>
            <person name="Jacobsen S.E."/>
            <person name="Fischer R.L."/>
        </authorList>
    </citation>
    <scope>NOMENCLATURE</scope>
</reference>